<comment type="function">
    <text evidence="1">Involved in the biosynthesis of isopentenyl diphosphate (IPP) and dimethylallyl diphosphate (DMAPP), two major building blocks of isoprenoid compounds. Catalyzes the conversion of 4-diphosphocytidyl-2-C-methyl-D-erythritol 2-phosphate (CDP-ME2P) to 2-C-methyl-D-erythritol 2,4-cyclodiphosphate (ME-CPP) with a corresponding release of cytidine 5-monophosphate (CMP).</text>
</comment>
<comment type="catalytic activity">
    <reaction evidence="1">
        <text>4-CDP-2-C-methyl-D-erythritol 2-phosphate = 2-C-methyl-D-erythritol 2,4-cyclic diphosphate + CMP</text>
        <dbReference type="Rhea" id="RHEA:23864"/>
        <dbReference type="ChEBI" id="CHEBI:57919"/>
        <dbReference type="ChEBI" id="CHEBI:58483"/>
        <dbReference type="ChEBI" id="CHEBI:60377"/>
        <dbReference type="EC" id="4.6.1.12"/>
    </reaction>
</comment>
<comment type="cofactor">
    <cofactor evidence="1">
        <name>a divalent metal cation</name>
        <dbReference type="ChEBI" id="CHEBI:60240"/>
    </cofactor>
    <text evidence="1">Binds 1 divalent metal cation per subunit.</text>
</comment>
<comment type="pathway">
    <text evidence="1">Isoprenoid biosynthesis; isopentenyl diphosphate biosynthesis via DXP pathway; isopentenyl diphosphate from 1-deoxy-D-xylulose 5-phosphate: step 4/6.</text>
</comment>
<comment type="subunit">
    <text evidence="1">Homotrimer.</text>
</comment>
<comment type="similarity">
    <text evidence="1">Belongs to the IspF family.</text>
</comment>
<dbReference type="EC" id="4.6.1.12" evidence="1"/>
<dbReference type="EMBL" id="CP000560">
    <property type="protein sequence ID" value="ABS72539.1"/>
    <property type="molecule type" value="Genomic_DNA"/>
</dbReference>
<dbReference type="RefSeq" id="WP_003156407.1">
    <property type="nucleotide sequence ID" value="NC_009725.2"/>
</dbReference>
<dbReference type="SMR" id="A7Z0L3"/>
<dbReference type="GeneID" id="93079255"/>
<dbReference type="KEGG" id="bay:RBAM_001160"/>
<dbReference type="HOGENOM" id="CLU_084630_2_0_9"/>
<dbReference type="UniPathway" id="UPA00056">
    <property type="reaction ID" value="UER00095"/>
</dbReference>
<dbReference type="Proteomes" id="UP000001120">
    <property type="component" value="Chromosome"/>
</dbReference>
<dbReference type="GO" id="GO:0008685">
    <property type="term" value="F:2-C-methyl-D-erythritol 2,4-cyclodiphosphate synthase activity"/>
    <property type="evidence" value="ECO:0007669"/>
    <property type="project" value="UniProtKB-UniRule"/>
</dbReference>
<dbReference type="GO" id="GO:0046872">
    <property type="term" value="F:metal ion binding"/>
    <property type="evidence" value="ECO:0007669"/>
    <property type="project" value="UniProtKB-KW"/>
</dbReference>
<dbReference type="GO" id="GO:0019288">
    <property type="term" value="P:isopentenyl diphosphate biosynthetic process, methylerythritol 4-phosphate pathway"/>
    <property type="evidence" value="ECO:0007669"/>
    <property type="project" value="UniProtKB-UniRule"/>
</dbReference>
<dbReference type="GO" id="GO:0016114">
    <property type="term" value="P:terpenoid biosynthetic process"/>
    <property type="evidence" value="ECO:0007669"/>
    <property type="project" value="InterPro"/>
</dbReference>
<dbReference type="CDD" id="cd00554">
    <property type="entry name" value="MECDP_synthase"/>
    <property type="match status" value="1"/>
</dbReference>
<dbReference type="FunFam" id="3.30.1330.50:FF:000001">
    <property type="entry name" value="2-C-methyl-D-erythritol 2,4-cyclodiphosphate synthase"/>
    <property type="match status" value="1"/>
</dbReference>
<dbReference type="Gene3D" id="3.30.1330.50">
    <property type="entry name" value="2-C-methyl-D-erythritol 2,4-cyclodiphosphate synthase"/>
    <property type="match status" value="1"/>
</dbReference>
<dbReference type="HAMAP" id="MF_00107">
    <property type="entry name" value="IspF"/>
    <property type="match status" value="1"/>
</dbReference>
<dbReference type="InterPro" id="IPR003526">
    <property type="entry name" value="MECDP_synthase"/>
</dbReference>
<dbReference type="InterPro" id="IPR020555">
    <property type="entry name" value="MECDP_synthase_CS"/>
</dbReference>
<dbReference type="InterPro" id="IPR036571">
    <property type="entry name" value="MECDP_synthase_sf"/>
</dbReference>
<dbReference type="NCBIfam" id="TIGR00151">
    <property type="entry name" value="ispF"/>
    <property type="match status" value="1"/>
</dbReference>
<dbReference type="PANTHER" id="PTHR43181">
    <property type="entry name" value="2-C-METHYL-D-ERYTHRITOL 2,4-CYCLODIPHOSPHATE SYNTHASE, CHLOROPLASTIC"/>
    <property type="match status" value="1"/>
</dbReference>
<dbReference type="PANTHER" id="PTHR43181:SF1">
    <property type="entry name" value="2-C-METHYL-D-ERYTHRITOL 2,4-CYCLODIPHOSPHATE SYNTHASE, CHLOROPLASTIC"/>
    <property type="match status" value="1"/>
</dbReference>
<dbReference type="Pfam" id="PF02542">
    <property type="entry name" value="YgbB"/>
    <property type="match status" value="1"/>
</dbReference>
<dbReference type="SUPFAM" id="SSF69765">
    <property type="entry name" value="IpsF-like"/>
    <property type="match status" value="1"/>
</dbReference>
<dbReference type="PROSITE" id="PS01350">
    <property type="entry name" value="ISPF"/>
    <property type="match status" value="1"/>
</dbReference>
<feature type="chain" id="PRO_1000022806" description="2-C-methyl-D-erythritol 2,4-cyclodiphosphate synthase">
    <location>
        <begin position="1"/>
        <end position="158"/>
    </location>
</feature>
<feature type="binding site" evidence="1">
    <location>
        <begin position="9"/>
        <end position="11"/>
    </location>
    <ligand>
        <name>4-CDP-2-C-methyl-D-erythritol 2-phosphate</name>
        <dbReference type="ChEBI" id="CHEBI:57919"/>
    </ligand>
</feature>
<feature type="binding site" evidence="1">
    <location>
        <position position="9"/>
    </location>
    <ligand>
        <name>a divalent metal cation</name>
        <dbReference type="ChEBI" id="CHEBI:60240"/>
    </ligand>
</feature>
<feature type="binding site" evidence="1">
    <location>
        <position position="11"/>
    </location>
    <ligand>
        <name>a divalent metal cation</name>
        <dbReference type="ChEBI" id="CHEBI:60240"/>
    </ligand>
</feature>
<feature type="binding site" evidence="1">
    <location>
        <begin position="35"/>
        <end position="36"/>
    </location>
    <ligand>
        <name>4-CDP-2-C-methyl-D-erythritol 2-phosphate</name>
        <dbReference type="ChEBI" id="CHEBI:57919"/>
    </ligand>
</feature>
<feature type="binding site" evidence="1">
    <location>
        <position position="43"/>
    </location>
    <ligand>
        <name>a divalent metal cation</name>
        <dbReference type="ChEBI" id="CHEBI:60240"/>
    </ligand>
</feature>
<feature type="binding site" evidence="1">
    <location>
        <begin position="57"/>
        <end position="59"/>
    </location>
    <ligand>
        <name>4-CDP-2-C-methyl-D-erythritol 2-phosphate</name>
        <dbReference type="ChEBI" id="CHEBI:57919"/>
    </ligand>
</feature>
<feature type="binding site" evidence="1">
    <location>
        <begin position="62"/>
        <end position="66"/>
    </location>
    <ligand>
        <name>4-CDP-2-C-methyl-D-erythritol 2-phosphate</name>
        <dbReference type="ChEBI" id="CHEBI:57919"/>
    </ligand>
</feature>
<feature type="binding site" evidence="1">
    <location>
        <begin position="101"/>
        <end position="107"/>
    </location>
    <ligand>
        <name>4-CDP-2-C-methyl-D-erythritol 2-phosphate</name>
        <dbReference type="ChEBI" id="CHEBI:57919"/>
    </ligand>
</feature>
<feature type="binding site" evidence="1">
    <location>
        <begin position="133"/>
        <end position="136"/>
    </location>
    <ligand>
        <name>4-CDP-2-C-methyl-D-erythritol 2-phosphate</name>
        <dbReference type="ChEBI" id="CHEBI:57919"/>
    </ligand>
</feature>
<feature type="binding site" evidence="1">
    <location>
        <position position="140"/>
    </location>
    <ligand>
        <name>4-CDP-2-C-methyl-D-erythritol 2-phosphate</name>
        <dbReference type="ChEBI" id="CHEBI:57919"/>
    </ligand>
</feature>
<feature type="binding site" evidence="1">
    <location>
        <position position="143"/>
    </location>
    <ligand>
        <name>4-CDP-2-C-methyl-D-erythritol 2-phosphate</name>
        <dbReference type="ChEBI" id="CHEBI:57919"/>
    </ligand>
</feature>
<feature type="site" description="Transition state stabilizer" evidence="1">
    <location>
        <position position="35"/>
    </location>
</feature>
<feature type="site" description="Transition state stabilizer" evidence="1">
    <location>
        <position position="134"/>
    </location>
</feature>
<keyword id="KW-0414">Isoprene biosynthesis</keyword>
<keyword id="KW-0456">Lyase</keyword>
<keyword id="KW-0479">Metal-binding</keyword>
<organism>
    <name type="scientific">Bacillus velezensis (strain DSM 23117 / BGSC 10A6 / LMG 26770 / FZB42)</name>
    <name type="common">Bacillus amyloliquefaciens subsp. plantarum</name>
    <dbReference type="NCBI Taxonomy" id="326423"/>
    <lineage>
        <taxon>Bacteria</taxon>
        <taxon>Bacillati</taxon>
        <taxon>Bacillota</taxon>
        <taxon>Bacilli</taxon>
        <taxon>Bacillales</taxon>
        <taxon>Bacillaceae</taxon>
        <taxon>Bacillus</taxon>
        <taxon>Bacillus amyloliquefaciens group</taxon>
    </lineage>
</organism>
<proteinExistence type="inferred from homology"/>
<evidence type="ECO:0000255" key="1">
    <source>
        <dbReference type="HAMAP-Rule" id="MF_00107"/>
    </source>
</evidence>
<protein>
    <recommendedName>
        <fullName evidence="1">2-C-methyl-D-erythritol 2,4-cyclodiphosphate synthase</fullName>
        <shortName evidence="1">MECDP-synthase</shortName>
        <shortName evidence="1">MECPP-synthase</shortName>
        <shortName evidence="1">MECPS</shortName>
        <ecNumber evidence="1">4.6.1.12</ecNumber>
    </recommendedName>
</protein>
<reference key="1">
    <citation type="journal article" date="2007" name="Nat. Biotechnol.">
        <title>Comparative analysis of the complete genome sequence of the plant growth-promoting bacterium Bacillus amyloliquefaciens FZB42.</title>
        <authorList>
            <person name="Chen X.H."/>
            <person name="Koumoutsi A."/>
            <person name="Scholz R."/>
            <person name="Eisenreich A."/>
            <person name="Schneider K."/>
            <person name="Heinemeyer I."/>
            <person name="Morgenstern B."/>
            <person name="Voss B."/>
            <person name="Hess W.R."/>
            <person name="Reva O."/>
            <person name="Junge H."/>
            <person name="Voigt B."/>
            <person name="Jungblut P.R."/>
            <person name="Vater J."/>
            <person name="Suessmuth R."/>
            <person name="Liesegang H."/>
            <person name="Strittmatter A."/>
            <person name="Gottschalk G."/>
            <person name="Borriss R."/>
        </authorList>
    </citation>
    <scope>NUCLEOTIDE SEQUENCE [LARGE SCALE GENOMIC DNA]</scope>
    <source>
        <strain>DSM 23117 / BGSC 10A6 / LMG 26770 / FZB42</strain>
    </source>
</reference>
<name>ISPF_BACVZ</name>
<sequence length="158" mass="17046">MFRIGQGFDVHQLTEGRPLIIGGIEIPYEKGLLGHSDADVLLHTVADACLGAAGEGDIGKHFPDTDPEFKDADSFKLLQHVWNIVKEKGYVLGNIDCTIIAQKPKMAPHIDAMRKRIAEGLEADVSQVNVKATTTEKLGFTGRAEGIAAQATVLIQKA</sequence>
<accession>A7Z0L3</accession>
<gene>
    <name evidence="1" type="primary">ispF</name>
    <name type="ordered locus">RBAM_001160</name>
</gene>